<keyword id="KW-0165">Cleavage on pair of basic residues</keyword>
<keyword id="KW-1015">Disulfide bond</keyword>
<keyword id="KW-0325">Glycoprotein</keyword>
<keyword id="KW-0407">Ion channel</keyword>
<keyword id="KW-0406">Ion transport</keyword>
<keyword id="KW-0691">RNA editing</keyword>
<keyword id="KW-0964">Secreted</keyword>
<keyword id="KW-0732">Signal</keyword>
<keyword id="KW-0813">Transport</keyword>
<keyword id="KW-1182">Viral ion channel</keyword>
<organismHost>
    <name type="scientific">Epomops franqueti</name>
    <name type="common">Franquet's epauletted fruit bat</name>
    <name type="synonym">Epomophorus franqueti</name>
    <dbReference type="NCBI Taxonomy" id="77231"/>
</organismHost>
<organismHost>
    <name type="scientific">Homo sapiens</name>
    <name type="common">Human</name>
    <dbReference type="NCBI Taxonomy" id="9606"/>
</organismHost>
<organismHost>
    <name type="scientific">Myonycteris torquata</name>
    <name type="common">Little collared fruit bat</name>
    <dbReference type="NCBI Taxonomy" id="77243"/>
</organismHost>
<organismHost>
    <name type="scientific">Sus scrofa</name>
    <name type="common">Pig</name>
    <dbReference type="NCBI Taxonomy" id="9823"/>
</organismHost>
<evidence type="ECO:0000250" key="1"/>
<evidence type="ECO:0000250" key="2">
    <source>
        <dbReference type="UniProtKB" id="P60170"/>
    </source>
</evidence>
<evidence type="ECO:0000255" key="3"/>
<evidence type="ECO:0000269" key="4">
    <source>
    </source>
</evidence>
<evidence type="ECO:0000305" key="5"/>
<reference key="1">
    <citation type="journal article" date="1996" name="Proc. Natl. Acad. Sci. U.S.A.">
        <title>The virion glycoproteins of Ebola viruses are encoded in two reading frames and are expressed through transcriptional editing.</title>
        <authorList>
            <person name="Sanchez A."/>
            <person name="Trappier S.G."/>
            <person name="Mahy B.W.J."/>
            <person name="Peters C.J."/>
            <person name="Nichol S.T."/>
        </authorList>
    </citation>
    <scope>NUCLEOTIDE SEQUENCE [GENOMIC RNA]</scope>
    <scope>RNA EDITING</scope>
</reference>
<reference key="2">
    <citation type="submission" date="1997-11" db="EMBL/GenBank/DDBJ databases">
        <authorList>
            <person name="Volchkov V.E."/>
        </authorList>
    </citation>
    <scope>NUCLEOTIDE SEQUENCE [GENOMIC RNA]</scope>
</reference>
<reference key="3">
    <citation type="journal article" date="2002" name="Virus Res.">
        <title>Molecular characterization of an isolate from the 1989/90 epizootic of Ebola virus Reston among macaques imported into the United States.</title>
        <authorList>
            <person name="Groseth A."/>
            <person name="Stroeher U."/>
            <person name="Theriault S."/>
            <person name="Feldmann H."/>
        </authorList>
    </citation>
    <scope>NUCLEOTIDE SEQUENCE [GENOMIC RNA]</scope>
</reference>
<reference key="4">
    <citation type="journal article" date="2005" name="Virology">
        <title>A reconstituted replication and transcription system for Ebola virus Reston and comparison with Ebola virus Zaire.</title>
        <authorList>
            <person name="Boehmann Y."/>
            <person name="Enterlein S."/>
            <person name="Randolf A."/>
            <person name="Muehlberger E.I."/>
        </authorList>
    </citation>
    <scope>NUCLEOTIDE SEQUENCE [GENOMIC RNA]</scope>
    <source>
        <strain>Isolate Pennsylvania-89</strain>
    </source>
</reference>
<protein>
    <recommendedName>
        <fullName>Pre-small/secreted glycoprotein</fullName>
        <shortName>pre-sGP</shortName>
    </recommendedName>
    <component>
        <recommendedName>
            <fullName>Small/secreted glycoprotein</fullName>
            <shortName>sGP</shortName>
        </recommendedName>
    </component>
    <component>
        <recommendedName>
            <fullName>Delta-peptide</fullName>
        </recommendedName>
    </component>
</protein>
<feature type="signal peptide" evidence="3">
    <location>
        <begin position="1"/>
        <end position="33"/>
    </location>
</feature>
<feature type="chain" id="PRO_0000037497" description="Pre-small/secreted glycoprotein" evidence="1">
    <location>
        <begin position="34"/>
        <end position="367"/>
    </location>
</feature>
<feature type="chain" id="PRO_0000037498" description="Small/secreted glycoprotein" evidence="1">
    <location>
        <begin position="34"/>
        <end position="325"/>
    </location>
</feature>
<feature type="chain" id="PRO_0000037499" description="Delta-peptide" evidence="1">
    <location>
        <begin position="326"/>
        <end position="367"/>
    </location>
</feature>
<feature type="site" description="Cleavage; by host furin" evidence="1">
    <location>
        <begin position="325"/>
        <end position="326"/>
    </location>
</feature>
<feature type="glycosylation site" description="N-linked (GlcNAc...) asparagine; by host" evidence="3">
    <location>
        <position position="41"/>
    </location>
</feature>
<feature type="glycosylation site" description="N-linked (GlcNAc...) asparagine; by host" evidence="3">
    <location>
        <position position="205"/>
    </location>
</feature>
<feature type="glycosylation site" description="N-linked (GlcNAc...) asparagine; by host" evidence="3">
    <location>
        <position position="229"/>
    </location>
</feature>
<feature type="glycosylation site" description="N-linked (GlcNAc...) asparagine; by host" evidence="3">
    <location>
        <position position="239"/>
    </location>
</feature>
<feature type="glycosylation site" description="N-linked (GlcNAc...) asparagine; by host" evidence="3">
    <location>
        <position position="258"/>
    </location>
</feature>
<feature type="glycosylation site" description="N-linked (GlcNAc...) asparagine; by host" evidence="3">
    <location>
        <position position="269"/>
    </location>
</feature>
<feature type="disulfide bond" description="Interchain" evidence="1">
    <location>
        <position position="54"/>
    </location>
</feature>
<feature type="disulfide bond" evidence="1">
    <location>
        <begin position="109"/>
        <end position="136"/>
    </location>
</feature>
<feature type="disulfide bond" evidence="1">
    <location>
        <begin position="122"/>
        <end position="148"/>
    </location>
</feature>
<feature type="disulfide bond" description="Interchain" evidence="1">
    <location>
        <position position="307"/>
    </location>
</feature>
<feature type="sequence variant">
    <original>Y</original>
    <variation>H</variation>
    <location>
        <position position="312"/>
    </location>
</feature>
<comment type="function">
    <molecule>Small/secreted glycoprotein</molecule>
    <text evidence="2">Seems to possess an anti-inflammatory activity as it can reverse the barrier-decreasing effects of TNF alpha. Might therefore contribute to the lack of inflammatory reaction seen during infection in spite the of extensive necrosis and massive virus production. Does not seem to be involved in activation of primary macrophages. Does not seem to interact specifically with neutrophils.</text>
</comment>
<comment type="function">
    <molecule>Delta-peptide</molecule>
    <text evidence="2">Viroporin that permeabilizes mammalian cell plasma membranes. It acts by altering permeation of ionic compounds and small molecules. This activity may lead to viral enterotoxic activity.</text>
</comment>
<comment type="subunit">
    <molecule>Small/secreted glycoprotein</molecule>
    <text evidence="2">Homodimer; disulfide-linked (By similarity). The homodimers are linked by two disulfide bonds in a parallel orientation (By similarity).</text>
</comment>
<comment type="subunit">
    <molecule>Delta-peptide</molecule>
    <text>Monomer.</text>
</comment>
<comment type="subcellular location">
    <molecule>Small/secreted glycoprotein</molecule>
    <subcellularLocation>
        <location evidence="2">Secreted</location>
    </subcellularLocation>
</comment>
<comment type="subcellular location">
    <molecule>Delta-peptide</molecule>
    <subcellularLocation>
        <location evidence="2">Secreted</location>
    </subcellularLocation>
</comment>
<comment type="PTM">
    <molecule>Pre-small/secreted glycoprotein</molecule>
    <text evidence="2">This precursor is processed into mature sGP and delta-peptide by host furin or furin-like proteases. The cleavage site corresponds to the furin optimal cleavage sequence [KR]-X-[KR]-R.</text>
</comment>
<comment type="PTM">
    <molecule>Small/secreted glycoprotein</molecule>
    <text evidence="2">N-glycosylated.</text>
</comment>
<comment type="PTM">
    <molecule>Delta-peptide</molecule>
    <text evidence="2">O-glycosylated.</text>
</comment>
<comment type="RNA editing">
    <location>
        <position position="296" evidence="4"/>
    </location>
    <text>Partially edited. RNA editing at this position consists of an insertion of one or two adenine nucleotides. The sequence displayed here is the full-length transmembrane glycoprotein GP, derived from the +1A edited RNA. The unedited RNA gives rise to the small secreted glycoprotein sGP (AC Q66799), the +2A edited RNA gives rise to the super small secreted glycoprotein ssGP (AC P0C771).</text>
</comment>
<comment type="similarity">
    <text evidence="5">Belongs to the filoviruses glycoprotein family.</text>
</comment>
<dbReference type="EMBL" id="U23152">
    <property type="protein sequence ID" value="AAC54884.1"/>
    <property type="molecule type" value="Genomic_RNA"/>
</dbReference>
<dbReference type="EMBL" id="AF034645">
    <property type="protein sequence ID" value="AAC24345.1"/>
    <property type="molecule type" value="Genomic_RNA"/>
</dbReference>
<dbReference type="EMBL" id="AF522874">
    <property type="protein sequence ID" value="AAN04451.1"/>
    <property type="molecule type" value="Genomic_RNA"/>
</dbReference>
<dbReference type="EMBL" id="AY769362">
    <property type="protein sequence ID" value="AAV48578.1"/>
    <property type="molecule type" value="Genomic_RNA"/>
</dbReference>
<dbReference type="RefSeq" id="NP_690584.1">
    <property type="nucleotide sequence ID" value="NC_004161.1"/>
</dbReference>
<dbReference type="SMR" id="Q66800"/>
<dbReference type="GlyCosmos" id="Q66800">
    <property type="glycosylation" value="6 sites, No reported glycans"/>
</dbReference>
<dbReference type="GeneID" id="955190"/>
<dbReference type="Proteomes" id="UP000007207">
    <property type="component" value="Segment"/>
</dbReference>
<dbReference type="Proteomes" id="UP000138664">
    <property type="component" value="Genome"/>
</dbReference>
<dbReference type="GO" id="GO:0005576">
    <property type="term" value="C:extracellular region"/>
    <property type="evidence" value="ECO:0007669"/>
    <property type="project" value="UniProtKB-SubCell"/>
</dbReference>
<dbReference type="GO" id="GO:0033644">
    <property type="term" value="C:host cell membrane"/>
    <property type="evidence" value="ECO:0007669"/>
    <property type="project" value="UniProtKB-KW"/>
</dbReference>
<dbReference type="GO" id="GO:0015267">
    <property type="term" value="F:channel activity"/>
    <property type="evidence" value="ECO:0007669"/>
    <property type="project" value="UniProtKB-KW"/>
</dbReference>
<dbReference type="GO" id="GO:0034220">
    <property type="term" value="P:monoatomic ion transmembrane transport"/>
    <property type="evidence" value="ECO:0007669"/>
    <property type="project" value="UniProtKB-KW"/>
</dbReference>
<dbReference type="InterPro" id="IPR014625">
    <property type="entry name" value="GPC_FiloV"/>
</dbReference>
<dbReference type="InterPro" id="IPR002561">
    <property type="entry name" value="GPC_filovir-type_extra_dom"/>
</dbReference>
<dbReference type="Pfam" id="PF01611">
    <property type="entry name" value="Filo_glycop"/>
    <property type="match status" value="1"/>
</dbReference>
<dbReference type="PIRSF" id="PIRSF036874">
    <property type="entry name" value="GPC_FiloV"/>
    <property type="match status" value="1"/>
</dbReference>
<proteinExistence type="inferred from homology"/>
<organism>
    <name type="scientific">Reston ebolavirus (strain Reston-89)</name>
    <name type="common">REBOV</name>
    <name type="synonym">Reston Ebola virus</name>
    <dbReference type="NCBI Taxonomy" id="386032"/>
    <lineage>
        <taxon>Viruses</taxon>
        <taxon>Riboviria</taxon>
        <taxon>Orthornavirae</taxon>
        <taxon>Negarnaviricota</taxon>
        <taxon>Haploviricotina</taxon>
        <taxon>Monjiviricetes</taxon>
        <taxon>Mononegavirales</taxon>
        <taxon>Filoviridae</taxon>
        <taxon>Orthoebolavirus</taxon>
        <taxon>Orthoebolavirus restonense</taxon>
        <taxon>Reston ebolavirus</taxon>
    </lineage>
</organism>
<gene>
    <name type="primary">GP</name>
</gene>
<sequence>MGSGYQLLQLPRERFRKTSFLVWVIILFQRAISMPLGIVTNSTLKATEIDQLVCRDKLSSTSQLKSVGLNLEGNGIATDVPSATKRWGFRSGVPPKVVSYEAGEWAENCYNLEIKKSDGSECLPLPPDGVRGFPRCRYVHKVQGTGPCPGDLAFHKNGAFFLYDRLASTVIYRGTTFAEGVVAFLILSEPKKHFWKATPAHEPVNTTDDSTSYYMTLTLSYEMSNFGGNESNTLFKVDNHTYVQLDRPHTPQFLVQLNETLRRNNRLSNSTGRLTWTLDPKIEPDVGEWAFWETKKTFPNNFMEKTCISKFYQPTPTTPQIRARRELSKEKLATTHPPTTPSWFQRIPLQWFQCSLQDGQRKCRPKV</sequence>
<name>VSGP_EBORR</name>
<accession>Q66800</accession>
<accession>Q5UAK7</accession>
<accession>Q8JPX7</accession>